<keyword id="KW-0130">Cell adhesion</keyword>
<keyword id="KW-0165">Cleavage on pair of basic residues</keyword>
<keyword id="KW-0202">Cytokine</keyword>
<keyword id="KW-0217">Developmental protein</keyword>
<keyword id="KW-1015">Disulfide bond</keyword>
<keyword id="KW-0325">Glycoprotein</keyword>
<keyword id="KW-0339">Growth factor</keyword>
<keyword id="KW-1185">Reference proteome</keyword>
<keyword id="KW-0964">Secreted</keyword>
<keyword id="KW-0732">Signal</keyword>
<accession>Q9R229</accession>
<accession>A6H6S5</accession>
<accession>Q9Z1V8</accession>
<gene>
    <name type="primary">Bmp10</name>
</gene>
<dbReference type="EMBL" id="AF101033">
    <property type="protein sequence ID" value="AAC95357.1"/>
    <property type="molecule type" value="mRNA"/>
</dbReference>
<dbReference type="EMBL" id="AF101440">
    <property type="protein sequence ID" value="AAC77461.1"/>
    <property type="molecule type" value="Genomic_DNA"/>
</dbReference>
<dbReference type="EMBL" id="AF101439">
    <property type="protein sequence ID" value="AAC77461.1"/>
    <property type="status" value="JOINED"/>
    <property type="molecule type" value="Genomic_DNA"/>
</dbReference>
<dbReference type="EMBL" id="BC145983">
    <property type="protein sequence ID" value="AAI45984.1"/>
    <property type="molecule type" value="mRNA"/>
</dbReference>
<dbReference type="CCDS" id="CCDS51838.1"/>
<dbReference type="RefSeq" id="NP_033886.2">
    <property type="nucleotide sequence ID" value="NM_009756.3"/>
</dbReference>
<dbReference type="SMR" id="Q9R229"/>
<dbReference type="FunCoup" id="Q9R229">
    <property type="interactions" value="345"/>
</dbReference>
<dbReference type="STRING" id="10090.ENSMUSP00000032125"/>
<dbReference type="GlyCosmos" id="Q9R229">
    <property type="glycosylation" value="2 sites, No reported glycans"/>
</dbReference>
<dbReference type="GlyGen" id="Q9R229">
    <property type="glycosylation" value="3 sites, 1 O-linked glycan (1 site)"/>
</dbReference>
<dbReference type="PhosphoSitePlus" id="Q9R229"/>
<dbReference type="PaxDb" id="10090-ENSMUSP00000032125"/>
<dbReference type="ProteomicsDB" id="265217"/>
<dbReference type="Antibodypedia" id="16182">
    <property type="antibodies" value="394 antibodies from 37 providers"/>
</dbReference>
<dbReference type="DNASU" id="12154"/>
<dbReference type="Ensembl" id="ENSMUST00000032125.7">
    <property type="protein sequence ID" value="ENSMUSP00000032125.6"/>
    <property type="gene ID" value="ENSMUSG00000030046.7"/>
</dbReference>
<dbReference type="GeneID" id="12154"/>
<dbReference type="KEGG" id="mmu:12154"/>
<dbReference type="UCSC" id="uc012eol.1">
    <property type="organism name" value="mouse"/>
</dbReference>
<dbReference type="AGR" id="MGI:1338820"/>
<dbReference type="CTD" id="27302"/>
<dbReference type="MGI" id="MGI:1338820">
    <property type="gene designation" value="Bmp10"/>
</dbReference>
<dbReference type="VEuPathDB" id="HostDB:ENSMUSG00000030046"/>
<dbReference type="eggNOG" id="KOG3900">
    <property type="taxonomic scope" value="Eukaryota"/>
</dbReference>
<dbReference type="GeneTree" id="ENSGT00940000156279"/>
<dbReference type="HOGENOM" id="CLU_020515_2_0_1"/>
<dbReference type="InParanoid" id="Q9R229"/>
<dbReference type="OMA" id="DNEWKTF"/>
<dbReference type="OrthoDB" id="5987191at2759"/>
<dbReference type="PhylomeDB" id="Q9R229"/>
<dbReference type="TreeFam" id="TF316134"/>
<dbReference type="Reactome" id="R-MMU-201451">
    <property type="pathway name" value="Signaling by BMP"/>
</dbReference>
<dbReference type="Reactome" id="R-MMU-2129379">
    <property type="pathway name" value="Molecules associated with elastic fibres"/>
</dbReference>
<dbReference type="BioGRID-ORCS" id="12154">
    <property type="hits" value="4 hits in 76 CRISPR screens"/>
</dbReference>
<dbReference type="PRO" id="PR:Q9R229"/>
<dbReference type="Proteomes" id="UP000000589">
    <property type="component" value="Chromosome 6"/>
</dbReference>
<dbReference type="RNAct" id="Q9R229">
    <property type="molecule type" value="protein"/>
</dbReference>
<dbReference type="Bgee" id="ENSMUSG00000030046">
    <property type="expression patterns" value="Expressed in cardiac atrium and 24 other cell types or tissues"/>
</dbReference>
<dbReference type="GO" id="GO:0009986">
    <property type="term" value="C:cell surface"/>
    <property type="evidence" value="ECO:0007669"/>
    <property type="project" value="Ensembl"/>
</dbReference>
<dbReference type="GO" id="GO:0005615">
    <property type="term" value="C:extracellular space"/>
    <property type="evidence" value="ECO:0007669"/>
    <property type="project" value="UniProtKB-KW"/>
</dbReference>
<dbReference type="GO" id="GO:0030018">
    <property type="term" value="C:Z disc"/>
    <property type="evidence" value="ECO:0007669"/>
    <property type="project" value="Ensembl"/>
</dbReference>
<dbReference type="GO" id="GO:0005125">
    <property type="term" value="F:cytokine activity"/>
    <property type="evidence" value="ECO:0007669"/>
    <property type="project" value="UniProtKB-KW"/>
</dbReference>
<dbReference type="GO" id="GO:0008083">
    <property type="term" value="F:growth factor activity"/>
    <property type="evidence" value="ECO:0007669"/>
    <property type="project" value="UniProtKB-KW"/>
</dbReference>
<dbReference type="GO" id="GO:0005179">
    <property type="term" value="F:hormone activity"/>
    <property type="evidence" value="ECO:0007669"/>
    <property type="project" value="Ensembl"/>
</dbReference>
<dbReference type="GO" id="GO:0033612">
    <property type="term" value="F:receptor serine/threonine kinase binding"/>
    <property type="evidence" value="ECO:0000250"/>
    <property type="project" value="UniProtKB"/>
</dbReference>
<dbReference type="GO" id="GO:0031433">
    <property type="term" value="F:telethonin binding"/>
    <property type="evidence" value="ECO:0007669"/>
    <property type="project" value="Ensembl"/>
</dbReference>
<dbReference type="GO" id="GO:0032924">
    <property type="term" value="P:activin receptor signaling pathway"/>
    <property type="evidence" value="ECO:0007669"/>
    <property type="project" value="Ensembl"/>
</dbReference>
<dbReference type="GO" id="GO:0007512">
    <property type="term" value="P:adult heart development"/>
    <property type="evidence" value="ECO:0000315"/>
    <property type="project" value="BHF-UCL"/>
</dbReference>
<dbReference type="GO" id="GO:0055009">
    <property type="term" value="P:atrial cardiac muscle tissue morphogenesis"/>
    <property type="evidence" value="ECO:0000270"/>
    <property type="project" value="BHF-UCL"/>
</dbReference>
<dbReference type="GO" id="GO:0030509">
    <property type="term" value="P:BMP signaling pathway"/>
    <property type="evidence" value="ECO:0000314"/>
    <property type="project" value="BHF-UCL"/>
</dbReference>
<dbReference type="GO" id="GO:0060038">
    <property type="term" value="P:cardiac muscle cell proliferation"/>
    <property type="evidence" value="ECO:0000315"/>
    <property type="project" value="UniProtKB"/>
</dbReference>
<dbReference type="GO" id="GO:0007155">
    <property type="term" value="P:cell adhesion"/>
    <property type="evidence" value="ECO:0007669"/>
    <property type="project" value="UniProtKB-KW"/>
</dbReference>
<dbReference type="GO" id="GO:0007507">
    <property type="term" value="P:heart development"/>
    <property type="evidence" value="ECO:0000315"/>
    <property type="project" value="MGI"/>
</dbReference>
<dbReference type="GO" id="GO:0060347">
    <property type="term" value="P:heart trabecula formation"/>
    <property type="evidence" value="ECO:0000315"/>
    <property type="project" value="BHF-UCL"/>
</dbReference>
<dbReference type="GO" id="GO:0001822">
    <property type="term" value="P:kidney development"/>
    <property type="evidence" value="ECO:0000315"/>
    <property type="project" value="MGI"/>
</dbReference>
<dbReference type="GO" id="GO:0010614">
    <property type="term" value="P:negative regulation of cardiac muscle hypertrophy"/>
    <property type="evidence" value="ECO:0000315"/>
    <property type="project" value="BHF-UCL"/>
</dbReference>
<dbReference type="GO" id="GO:0030308">
    <property type="term" value="P:negative regulation of cell growth"/>
    <property type="evidence" value="ECO:0000250"/>
    <property type="project" value="UniProtKB"/>
</dbReference>
<dbReference type="GO" id="GO:0030336">
    <property type="term" value="P:negative regulation of cell migration"/>
    <property type="evidence" value="ECO:0000250"/>
    <property type="project" value="UniProtKB"/>
</dbReference>
<dbReference type="GO" id="GO:0010596">
    <property type="term" value="P:negative regulation of endothelial cell migration"/>
    <property type="evidence" value="ECO:0007669"/>
    <property type="project" value="Ensembl"/>
</dbReference>
<dbReference type="GO" id="GO:0060045">
    <property type="term" value="P:positive regulation of cardiac muscle cell proliferation"/>
    <property type="evidence" value="ECO:0000315"/>
    <property type="project" value="BHF-UCL"/>
</dbReference>
<dbReference type="GO" id="GO:0010613">
    <property type="term" value="P:positive regulation of cardiac muscle hypertrophy"/>
    <property type="evidence" value="ECO:0007669"/>
    <property type="project" value="Ensembl"/>
</dbReference>
<dbReference type="GO" id="GO:0061036">
    <property type="term" value="P:positive regulation of cartilage development"/>
    <property type="evidence" value="ECO:0000314"/>
    <property type="project" value="UniProtKB"/>
</dbReference>
<dbReference type="GO" id="GO:2000138">
    <property type="term" value="P:positive regulation of cell proliferation involved in heart morphogenesis"/>
    <property type="evidence" value="ECO:0000316"/>
    <property type="project" value="BHF-UCL"/>
</dbReference>
<dbReference type="GO" id="GO:0045893">
    <property type="term" value="P:positive regulation of DNA-templated transcription"/>
    <property type="evidence" value="ECO:0007669"/>
    <property type="project" value="Ensembl"/>
</dbReference>
<dbReference type="GO" id="GO:0010628">
    <property type="term" value="P:positive regulation of gene expression"/>
    <property type="evidence" value="ECO:0000314"/>
    <property type="project" value="MGI"/>
</dbReference>
<dbReference type="GO" id="GO:0060298">
    <property type="term" value="P:positive regulation of sarcomere organization"/>
    <property type="evidence" value="ECO:0007669"/>
    <property type="project" value="Ensembl"/>
</dbReference>
<dbReference type="GO" id="GO:0060391">
    <property type="term" value="P:positive regulation of SMAD protein signal transduction"/>
    <property type="evidence" value="ECO:0000314"/>
    <property type="project" value="BHF-UCL"/>
</dbReference>
<dbReference type="GO" id="GO:0055117">
    <property type="term" value="P:regulation of cardiac muscle contraction"/>
    <property type="evidence" value="ECO:0007669"/>
    <property type="project" value="Ensembl"/>
</dbReference>
<dbReference type="GO" id="GO:1903242">
    <property type="term" value="P:regulation of cardiac muscle hypertrophy in response to stress"/>
    <property type="evidence" value="ECO:0007669"/>
    <property type="project" value="Ensembl"/>
</dbReference>
<dbReference type="GO" id="GO:0045214">
    <property type="term" value="P:sarcomere organization"/>
    <property type="evidence" value="ECO:0007669"/>
    <property type="project" value="Ensembl"/>
</dbReference>
<dbReference type="GO" id="GO:0055015">
    <property type="term" value="P:ventricular cardiac muscle cell development"/>
    <property type="evidence" value="ECO:0000314"/>
    <property type="project" value="BHF-UCL"/>
</dbReference>
<dbReference type="GO" id="GO:0055010">
    <property type="term" value="P:ventricular cardiac muscle tissue morphogenesis"/>
    <property type="evidence" value="ECO:0000315"/>
    <property type="project" value="BHF-UCL"/>
</dbReference>
<dbReference type="CDD" id="cd19401">
    <property type="entry name" value="TGF_beta_BMP10"/>
    <property type="match status" value="1"/>
</dbReference>
<dbReference type="FunFam" id="2.60.120.970:FF:000013">
    <property type="entry name" value="Bone morphogenetic protein 10"/>
    <property type="match status" value="1"/>
</dbReference>
<dbReference type="FunFam" id="2.10.90.10:FF:000001">
    <property type="entry name" value="Bone morphogenetic protein 4"/>
    <property type="match status" value="1"/>
</dbReference>
<dbReference type="Gene3D" id="2.60.120.970">
    <property type="match status" value="1"/>
</dbReference>
<dbReference type="Gene3D" id="2.10.90.10">
    <property type="entry name" value="Cystine-knot cytokines"/>
    <property type="match status" value="1"/>
</dbReference>
<dbReference type="InterPro" id="IPR029034">
    <property type="entry name" value="Cystine-knot_cytokine"/>
</dbReference>
<dbReference type="InterPro" id="IPR001839">
    <property type="entry name" value="TGF-b_C"/>
</dbReference>
<dbReference type="InterPro" id="IPR001111">
    <property type="entry name" value="TGF-b_propeptide"/>
</dbReference>
<dbReference type="InterPro" id="IPR015615">
    <property type="entry name" value="TGF-beta-rel"/>
</dbReference>
<dbReference type="InterPro" id="IPR017948">
    <property type="entry name" value="TGFb_CS"/>
</dbReference>
<dbReference type="PANTHER" id="PTHR11848:SF39">
    <property type="entry name" value="BONE MORPHOGENETIC PROTEIN 10"/>
    <property type="match status" value="1"/>
</dbReference>
<dbReference type="PANTHER" id="PTHR11848">
    <property type="entry name" value="TGF-BETA FAMILY"/>
    <property type="match status" value="1"/>
</dbReference>
<dbReference type="Pfam" id="PF00019">
    <property type="entry name" value="TGF_beta"/>
    <property type="match status" value="1"/>
</dbReference>
<dbReference type="Pfam" id="PF00688">
    <property type="entry name" value="TGFb_propeptide"/>
    <property type="match status" value="1"/>
</dbReference>
<dbReference type="PRINTS" id="PR00669">
    <property type="entry name" value="INHIBINA"/>
</dbReference>
<dbReference type="SMART" id="SM00204">
    <property type="entry name" value="TGFB"/>
    <property type="match status" value="1"/>
</dbReference>
<dbReference type="SUPFAM" id="SSF57501">
    <property type="entry name" value="Cystine-knot cytokines"/>
    <property type="match status" value="1"/>
</dbReference>
<dbReference type="PROSITE" id="PS00250">
    <property type="entry name" value="TGF_BETA_1"/>
    <property type="match status" value="1"/>
</dbReference>
<dbReference type="PROSITE" id="PS51362">
    <property type="entry name" value="TGF_BETA_2"/>
    <property type="match status" value="1"/>
</dbReference>
<comment type="function">
    <text evidence="2 6 7 8">Required for maintaining the proliferative activity of embryonic cardiomyocytes by preventing premature activation of the negative cell cycle regulator CDKN1C/p57KIP and maintaining the required expression levels of cardiogenic factors such as MEF2C and NKX2-5. Acts as a ligand for ACVRL1/ALK1, BMPR1A/ALK3 and BMPR1B/ALK6, leading to activation of SMAD1, SMAD5 and SMAD8 transcription factors. Inhibits endothelial cell migration and growth. May reduce cell migration and cell matrix adhesion in breast cancer cell lines (By similarity).</text>
</comment>
<comment type="subunit">
    <text evidence="2 3 9">Homodimer; disulfide-linked (By similarity). Interacts with FBN1 (via N-terminal domain) and FBN2 (By similarity). Interacts with ENG (PubMed:21737454).</text>
</comment>
<comment type="subcellular location">
    <subcellularLocation>
        <location evidence="1">Secreted</location>
    </subcellularLocation>
</comment>
<comment type="tissue specificity">
    <text evidence="5 6 7">In the embryo, expressed exclusively in the ventricular trabecular myocardium of the developing heart from 9.0 dpc-13.5 dpc. By 16.5 dpc-18.5 dpc, only detectable in atria. Highly expressed in the adult heart where it is found in the right atrium but not in the left atrium. Lower levels in adult liver and lung.</text>
</comment>
<comment type="developmental stage">
    <text evidence="8">Down-regulation after 14.5 dpc is critical for cardiomyocytes to undergo normal developmental hypertrophic growth in early postnatal life.</text>
</comment>
<comment type="disruption phenotype">
    <text evidence="6">Mice die in utero between 9.5 dpc and 10.5 dpc. They appear normal at 8.5 dpc-8.75 dpc but display cardiac dysgenesis at 9.0 dpc-9.5 dpc with profound hypoplastic ventricular walls and absence of ventricular trabeculae and have a significantly lower heart rate than wild type embryos. Mutants show up-regulation of Cdkn1c/p57KIP throughout the ventricular wall while levels of Mef2c and Nkx2-5 are normal at 8.5 dpc-8.75 dpc but are down-regulated at 9.25 dpc-9.5 dpc.</text>
</comment>
<comment type="similarity">
    <text evidence="10">Belongs to the TGF-beta family.</text>
</comment>
<protein>
    <recommendedName>
        <fullName>Bone morphogenetic protein 10</fullName>
        <shortName>BMP-10</shortName>
    </recommendedName>
</protein>
<evidence type="ECO:0000250" key="1"/>
<evidence type="ECO:0000250" key="2">
    <source>
        <dbReference type="UniProtKB" id="O95393"/>
    </source>
</evidence>
<evidence type="ECO:0000250" key="3">
    <source>
        <dbReference type="UniProtKB" id="P12643"/>
    </source>
</evidence>
<evidence type="ECO:0000255" key="4"/>
<evidence type="ECO:0000269" key="5">
    <source>
    </source>
</evidence>
<evidence type="ECO:0000269" key="6">
    <source>
    </source>
</evidence>
<evidence type="ECO:0000269" key="7">
    <source>
    </source>
</evidence>
<evidence type="ECO:0000269" key="8">
    <source>
    </source>
</evidence>
<evidence type="ECO:0000269" key="9">
    <source>
    </source>
</evidence>
<evidence type="ECO:0000305" key="10"/>
<organism>
    <name type="scientific">Mus musculus</name>
    <name type="common">Mouse</name>
    <dbReference type="NCBI Taxonomy" id="10090"/>
    <lineage>
        <taxon>Eukaryota</taxon>
        <taxon>Metazoa</taxon>
        <taxon>Chordata</taxon>
        <taxon>Craniata</taxon>
        <taxon>Vertebrata</taxon>
        <taxon>Euteleostomi</taxon>
        <taxon>Mammalia</taxon>
        <taxon>Eutheria</taxon>
        <taxon>Euarchontoglires</taxon>
        <taxon>Glires</taxon>
        <taxon>Rodentia</taxon>
        <taxon>Myomorpha</taxon>
        <taxon>Muroidea</taxon>
        <taxon>Muridae</taxon>
        <taxon>Murinae</taxon>
        <taxon>Mus</taxon>
        <taxon>Mus</taxon>
    </lineage>
</organism>
<name>BMP10_MOUSE</name>
<sequence>MGSLVLPLSAVFCLVAHSASGSPIMGLEQSPLEEDMPFFDDIFTEQDGIDFNTLLQSMKNEFLKTLNLSDIPVQDTGRVDPPEYMLELYNKFATDRTSMPSANIIRSFKNEDLFSQPVTFNGLRKYPLLFNVSIPHHEEVVMAELRLYTLVQRDRMMYDGVDRKITIFEVLESADGSEEERSMLVLVSTEIYGTNSEWETFDVTDATRRWQKSGPSTHQLEIHIESRQNQAEDTGRGQLEIDMSAQNKHDPLLVVFSDDQSNDKEQKEELNELITHEQDLDLDSDAFFSGPDEEALLQMRSNMIDDSSARIRRNAKGNYCKKTPLYIDFKEIGWDSWIIAPPGYEAYECRGVCNYPLAEHLTPTKHAIIQALVHLKNSQKASKACCVPTKLDPISILYLDKGVVTYKFKYEGMAVSECGCR</sequence>
<feature type="signal peptide" evidence="4">
    <location>
        <begin position="1"/>
        <end position="21"/>
    </location>
</feature>
<feature type="propeptide" id="PRO_0000033890" evidence="4">
    <location>
        <begin position="22"/>
        <end position="313"/>
    </location>
</feature>
<feature type="chain" id="PRO_0000033891" description="Bone morphogenetic protein 10">
    <location>
        <begin position="314"/>
        <end position="421"/>
    </location>
</feature>
<feature type="glycosylation site" description="N-linked (GlcNAc...) asparagine" evidence="4">
    <location>
        <position position="67"/>
    </location>
</feature>
<feature type="glycosylation site" description="N-linked (GlcNAc...) asparagine" evidence="4">
    <location>
        <position position="131"/>
    </location>
</feature>
<feature type="disulfide bond" evidence="1">
    <location>
        <begin position="320"/>
        <end position="386"/>
    </location>
</feature>
<feature type="disulfide bond" evidence="1">
    <location>
        <begin position="349"/>
        <end position="418"/>
    </location>
</feature>
<feature type="disulfide bond" evidence="1">
    <location>
        <begin position="353"/>
        <end position="420"/>
    </location>
</feature>
<feature type="disulfide bond" description="Interchain" evidence="1">
    <location>
        <position position="385"/>
    </location>
</feature>
<feature type="sequence conflict" description="In Ref. 1; AAC95357 and 2; AAC77461." evidence="10" ref="1 2">
    <original>E</original>
    <variation>K</variation>
    <location>
        <position position="83"/>
    </location>
</feature>
<feature type="sequence conflict" description="In Ref. 1; AAC95357." evidence="10" ref="1">
    <location>
        <position position="112"/>
    </location>
</feature>
<feature type="sequence conflict" description="In Ref. 1; AAC95357 and 2; AAC77461." evidence="10" ref="1 2">
    <original>A</original>
    <variation>T</variation>
    <location>
        <position position="309"/>
    </location>
</feature>
<reference key="1">
    <citation type="journal article" date="1999" name="Mech. Dev.">
        <title>Heart specific expression of mouse BMP-10 a novel member of the TGF-beta superfamily.</title>
        <authorList>
            <person name="Neuhaus H."/>
            <person name="Rosen V."/>
            <person name="Thies R.S."/>
        </authorList>
    </citation>
    <scope>NUCLEOTIDE SEQUENCE [MRNA]</scope>
    <scope>TISSUE SPECIFICITY</scope>
    <source>
        <strain>NIH Swiss</strain>
        <tissue>Heart</tissue>
    </source>
</reference>
<reference key="2">
    <citation type="submission" date="1998-10" db="EMBL/GenBank/DDBJ databases">
        <title>Mouse bone morphogenetic protein 10 (BMP-10) genomic sequence, full coding region of exon 2.</title>
        <authorList>
            <person name="Celeste A.J."/>
        </authorList>
    </citation>
    <scope>NUCLEOTIDE SEQUENCE [GENOMIC DNA]</scope>
</reference>
<reference key="3">
    <citation type="journal article" date="2004" name="Genome Res.">
        <title>The status, quality, and expansion of the NIH full-length cDNA project: the Mammalian Gene Collection (MGC).</title>
        <authorList>
            <consortium name="The MGC Project Team"/>
        </authorList>
    </citation>
    <scope>NUCLEOTIDE SEQUENCE [LARGE SCALE MRNA]</scope>
</reference>
<reference key="4">
    <citation type="journal article" date="2004" name="Cell">
        <title>Nkx2-5 pathways and congenital heart disease: loss of ventricular myocyte lineage specification leads to progressive cardiomyopathy and complete heart block.</title>
        <authorList>
            <person name="Pashmforoush M."/>
            <person name="Lu J.T."/>
            <person name="Chen H."/>
            <person name="Amand T.S."/>
            <person name="Kondo R."/>
            <person name="Pradervand S."/>
            <person name="Evans S.M."/>
            <person name="Clark B."/>
            <person name="Feramisco J.R."/>
            <person name="Giles W."/>
            <person name="Ho S.Y."/>
            <person name="Benson D.W."/>
            <person name="Silberbach M."/>
            <person name="Shou W."/>
            <person name="Chien K.R."/>
        </authorList>
    </citation>
    <scope>FUNCTION</scope>
    <scope>TISSUE SPECIFICITY</scope>
</reference>
<reference key="5">
    <citation type="journal article" date="2004" name="Development">
        <title>BMP10 is essential for maintaining cardiac growth during murine cardiogenesis.</title>
        <authorList>
            <person name="Chen H."/>
            <person name="Shi S."/>
            <person name="Acosta L."/>
            <person name="Li W."/>
            <person name="Lu J."/>
            <person name="Bao S."/>
            <person name="Chen Z."/>
            <person name="Yang Z."/>
            <person name="Schneider M.D."/>
            <person name="Chien K.R."/>
            <person name="Conway S.J."/>
            <person name="Yoder M.C."/>
            <person name="Haneline L.S."/>
            <person name="Franco D."/>
            <person name="Shou W."/>
        </authorList>
    </citation>
    <scope>FUNCTION</scope>
    <scope>TISSUE SPECIFICITY</scope>
    <scope>DISRUPTION PHENOTYPE</scope>
</reference>
<reference key="6">
    <citation type="journal article" date="2006" name="J. Biol. Chem.">
        <title>Overexpression of bone morphogenetic protein 10 in myocardium disrupts cardiac postnatal hypertrophic growth.</title>
        <authorList>
            <person name="Chen H."/>
            <person name="Yong W."/>
            <person name="Ren S."/>
            <person name="Shen W."/>
            <person name="He Y."/>
            <person name="Cox K.A."/>
            <person name="Zhu W."/>
            <person name="Li W."/>
            <person name="Soonpaa M."/>
            <person name="Payne R.M."/>
            <person name="Franco D."/>
            <person name="Field L.J."/>
            <person name="Rosen V."/>
            <person name="Wang Y."/>
            <person name="Shou W."/>
        </authorList>
    </citation>
    <scope>FUNCTION</scope>
    <scope>DEVELOPMENTAL STAGE</scope>
</reference>
<reference key="7">
    <citation type="journal article" date="2010" name="Cell">
        <title>A tissue-specific atlas of mouse protein phosphorylation and expression.</title>
        <authorList>
            <person name="Huttlin E.L."/>
            <person name="Jedrychowski M.P."/>
            <person name="Elias J.E."/>
            <person name="Goswami T."/>
            <person name="Rad R."/>
            <person name="Beausoleil S.A."/>
            <person name="Villen J."/>
            <person name="Haas W."/>
            <person name="Sowa M.E."/>
            <person name="Gygi S.P."/>
        </authorList>
    </citation>
    <scope>IDENTIFICATION BY MASS SPECTROMETRY [LARGE SCALE ANALYSIS]</scope>
    <source>
        <tissue>Heart</tissue>
    </source>
</reference>
<reference key="8">
    <citation type="journal article" date="2011" name="J. Biol. Chem.">
        <title>Soluble endoglin specifically binds bone morphogenetic proteins 9 and 10 via its orphan domain, inhibits blood vessel formation, and suppresses tumor growth.</title>
        <authorList>
            <person name="Castonguay R."/>
            <person name="Werner E.D."/>
            <person name="Matthews R.G."/>
            <person name="Presman E."/>
            <person name="Mulivor A.W."/>
            <person name="Solban N."/>
            <person name="Sako D."/>
            <person name="Pearsall R.S."/>
            <person name="Underwood K.W."/>
            <person name="Seehra J."/>
            <person name="Kumar R."/>
            <person name="Grinberg A.V."/>
        </authorList>
    </citation>
    <scope>INTERACTION WITH ENG</scope>
</reference>
<proteinExistence type="evidence at protein level"/>